<name>TY23_PITAZ</name>
<sequence length="5" mass="659">FPPWL</sequence>
<protein>
    <recommendedName>
        <fullName evidence="3">Tryptophyllin-T2-3</fullName>
        <shortName evidence="3">Pha-T2-3</shortName>
    </recommendedName>
    <alternativeName>
        <fullName evidence="3">Tryptophyllin-2</fullName>
    </alternativeName>
</protein>
<feature type="peptide" id="PRO_0000250411" description="Tryptophyllin-T2-3" evidence="2">
    <location>
        <begin position="1"/>
        <end position="5"/>
    </location>
</feature>
<feature type="modified residue" description="Leucine amide" evidence="2">
    <location>
        <position position="5"/>
    </location>
</feature>
<keyword id="KW-0027">Amidation</keyword>
<keyword id="KW-0878">Amphibian defense peptide</keyword>
<keyword id="KW-0903">Direct protein sequencing</keyword>
<keyword id="KW-0964">Secreted</keyword>
<proteinExistence type="evidence at protein level"/>
<accession>P84942</accession>
<reference evidence="4" key="1">
    <citation type="journal article" date="2007" name="J. Proteome Res.">
        <title>Amphibian skin secretomics: application of parallel quadrupole time-of-flight mass spectrometry and peptide precursor cDNA cloning to rapidly characterize the skin secretory peptidome of Phyllomedusa hypochondrialis azurea: discovery of a novel peptide family, the hyposins.</title>
        <authorList>
            <person name="Thompson A.H."/>
            <person name="Bjourson A.J."/>
            <person name="Orr D.F."/>
            <person name="Shaw C."/>
            <person name="McClean S."/>
        </authorList>
    </citation>
    <scope>PROTEIN SEQUENCE</scope>
    <scope>SUBCELLULAR LOCATION</scope>
    <scope>TISSUE SPECIFICITY</scope>
    <scope>MASS SPECTROMETRY</scope>
    <scope>AMIDATION AT LEU-5</scope>
    <source>
        <tissue evidence="2">Skin secretion</tissue>
    </source>
</reference>
<evidence type="ECO:0000255" key="1"/>
<evidence type="ECO:0000269" key="2">
    <source>
    </source>
</evidence>
<evidence type="ECO:0000303" key="3">
    <source>
    </source>
</evidence>
<evidence type="ECO:0000305" key="4"/>
<comment type="subcellular location">
    <subcellularLocation>
        <location evidence="2">Secreted</location>
    </subcellularLocation>
</comment>
<comment type="tissue specificity">
    <text evidence="2">Expressed by the skin glands.</text>
</comment>
<comment type="mass spectrometry" mass="657.39" method="MALDI" evidence="2"/>
<comment type="similarity">
    <text evidence="1">Belongs to the frog skin active peptide (FSAP) family. Tryptophillin subfamily.</text>
</comment>
<organism>
    <name type="scientific">Pithecopus azureus</name>
    <name type="common">Orange-legged monkey tree frog</name>
    <name type="synonym">Phyllomedusa azurea</name>
    <dbReference type="NCBI Taxonomy" id="2034991"/>
    <lineage>
        <taxon>Eukaryota</taxon>
        <taxon>Metazoa</taxon>
        <taxon>Chordata</taxon>
        <taxon>Craniata</taxon>
        <taxon>Vertebrata</taxon>
        <taxon>Euteleostomi</taxon>
        <taxon>Amphibia</taxon>
        <taxon>Batrachia</taxon>
        <taxon>Anura</taxon>
        <taxon>Neobatrachia</taxon>
        <taxon>Hyloidea</taxon>
        <taxon>Hylidae</taxon>
        <taxon>Phyllomedusinae</taxon>
        <taxon>Pithecopus</taxon>
    </lineage>
</organism>
<dbReference type="GO" id="GO:0005576">
    <property type="term" value="C:extracellular region"/>
    <property type="evidence" value="ECO:0007669"/>
    <property type="project" value="UniProtKB-SubCell"/>
</dbReference>
<dbReference type="GO" id="GO:0006952">
    <property type="term" value="P:defense response"/>
    <property type="evidence" value="ECO:0007669"/>
    <property type="project" value="UniProtKB-KW"/>
</dbReference>